<sequence length="180" mass="20757">MGNQHSLLNKEQLEQMKDNSSFSEAELKKLYRRFQMLDKDGSGTLTTDEFLSIPDLALNPLLERVIQIFDQNKDNEIEFFEFVGTLATLSHKGTKEDKLKFLFQIYDIDCDGFISNGELFQVLKMMVGTNLNDVQLQQIVDKTIIEGDYDKDGKISFDEFIHMIGNQEGIEEKLSVNWSE</sequence>
<protein>
    <recommendedName>
        <fullName>Calcineurin subunit B type 1</fullName>
    </recommendedName>
    <alternativeName>
        <fullName>Calcineurin regulatory subunit 1</fullName>
    </alternativeName>
    <alternativeName>
        <fullName>Protein phosphatase 2B regulatory subunit 1</fullName>
    </alternativeName>
</protein>
<dbReference type="EMBL" id="AJ301668">
    <property type="protein sequence ID" value="CAC20026.2"/>
    <property type="molecule type" value="Genomic_DNA"/>
</dbReference>
<dbReference type="EMBL" id="AAFI02000003">
    <property type="protein sequence ID" value="EAL73175.1"/>
    <property type="molecule type" value="Genomic_DNA"/>
</dbReference>
<dbReference type="EMBL" id="AAFI02000003">
    <property type="protein sequence ID" value="EAL73176.1"/>
    <property type="molecule type" value="Genomic_DNA"/>
</dbReference>
<dbReference type="RefSeq" id="XP_001134484.1">
    <property type="nucleotide sequence ID" value="XM_001134484.1"/>
</dbReference>
<dbReference type="RefSeq" id="XP_647297.1">
    <property type="nucleotide sequence ID" value="XM_642205.1"/>
</dbReference>
<dbReference type="SMR" id="Q55G87"/>
<dbReference type="FunCoup" id="Q55G87">
    <property type="interactions" value="414"/>
</dbReference>
<dbReference type="STRING" id="44689.Q55G87"/>
<dbReference type="PaxDb" id="44689-DDB0191204"/>
<dbReference type="EnsemblProtists" id="EAL73175">
    <property type="protein sequence ID" value="EAL73175"/>
    <property type="gene ID" value="DDB_G0267446"/>
</dbReference>
<dbReference type="EnsemblProtists" id="EAL73176">
    <property type="protein sequence ID" value="EAL73176"/>
    <property type="gene ID" value="DDB_G0267446"/>
</dbReference>
<dbReference type="GeneID" id="8616103"/>
<dbReference type="KEGG" id="ddi:DDB_G0267446"/>
<dbReference type="dictyBase" id="DDB_G0267446">
    <property type="gene designation" value="cnbA"/>
</dbReference>
<dbReference type="VEuPathDB" id="AmoebaDB:DDB_G0267446"/>
<dbReference type="eggNOG" id="KOG0034">
    <property type="taxonomic scope" value="Eukaryota"/>
</dbReference>
<dbReference type="InParanoid" id="Q55G87"/>
<dbReference type="OMA" id="DTNFDRD"/>
<dbReference type="PhylomeDB" id="Q55G87"/>
<dbReference type="Reactome" id="R-DDI-2871809">
    <property type="pathway name" value="FCERI mediated Ca+2 mobilization"/>
</dbReference>
<dbReference type="Reactome" id="R-DDI-4086398">
    <property type="pathway name" value="Ca2+ pathway"/>
</dbReference>
<dbReference type="Reactome" id="R-DDI-5607763">
    <property type="pathway name" value="CLEC7A (Dectin-1) induces NFAT activation"/>
</dbReference>
<dbReference type="PRO" id="PR:Q55G87"/>
<dbReference type="Proteomes" id="UP000002195">
    <property type="component" value="Chromosome 1"/>
</dbReference>
<dbReference type="GO" id="GO:0005955">
    <property type="term" value="C:calcineurin complex"/>
    <property type="evidence" value="ECO:0000314"/>
    <property type="project" value="dictyBase"/>
</dbReference>
<dbReference type="GO" id="GO:0005509">
    <property type="term" value="F:calcium ion binding"/>
    <property type="evidence" value="ECO:0007669"/>
    <property type="project" value="InterPro"/>
</dbReference>
<dbReference type="GO" id="GO:0008597">
    <property type="term" value="F:calcium-dependent protein serine/threonine phosphatase regulator activity"/>
    <property type="evidence" value="ECO:0000314"/>
    <property type="project" value="dictyBase"/>
</dbReference>
<dbReference type="GO" id="GO:0019902">
    <property type="term" value="F:phosphatase binding"/>
    <property type="evidence" value="ECO:0000318"/>
    <property type="project" value="GO_Central"/>
</dbReference>
<dbReference type="GO" id="GO:0019903">
    <property type="term" value="F:protein phosphatase binding"/>
    <property type="evidence" value="ECO:0000353"/>
    <property type="project" value="dictyBase"/>
</dbReference>
<dbReference type="GO" id="GO:0097720">
    <property type="term" value="P:calcineurin-mediated signaling"/>
    <property type="evidence" value="ECO:0000315"/>
    <property type="project" value="dictyBase"/>
</dbReference>
<dbReference type="GO" id="GO:0031287">
    <property type="term" value="P:positive regulation of sorocarp stalk cell differentiation"/>
    <property type="evidence" value="ECO:0000315"/>
    <property type="project" value="dictyBase"/>
</dbReference>
<dbReference type="GO" id="GO:0043157">
    <property type="term" value="P:response to cation stress"/>
    <property type="evidence" value="ECO:0000315"/>
    <property type="project" value="dictyBase"/>
</dbReference>
<dbReference type="CDD" id="cd00051">
    <property type="entry name" value="EFh"/>
    <property type="match status" value="1"/>
</dbReference>
<dbReference type="FunFam" id="1.10.238.10:FF:000229">
    <property type="entry name" value="Calcineurin B subunit isoform 1"/>
    <property type="match status" value="1"/>
</dbReference>
<dbReference type="Gene3D" id="1.10.238.10">
    <property type="entry name" value="EF-hand"/>
    <property type="match status" value="1"/>
</dbReference>
<dbReference type="InterPro" id="IPR011992">
    <property type="entry name" value="EF-hand-dom_pair"/>
</dbReference>
<dbReference type="InterPro" id="IPR018247">
    <property type="entry name" value="EF_Hand_1_Ca_BS"/>
</dbReference>
<dbReference type="InterPro" id="IPR002048">
    <property type="entry name" value="EF_hand_dom"/>
</dbReference>
<dbReference type="PANTHER" id="PTHR45942">
    <property type="entry name" value="PROTEIN PHOSPATASE 3 REGULATORY SUBUNIT B ALPHA ISOFORM TYPE 1"/>
    <property type="match status" value="1"/>
</dbReference>
<dbReference type="Pfam" id="PF13499">
    <property type="entry name" value="EF-hand_7"/>
    <property type="match status" value="2"/>
</dbReference>
<dbReference type="PRINTS" id="PR00450">
    <property type="entry name" value="RECOVERIN"/>
</dbReference>
<dbReference type="SMART" id="SM00054">
    <property type="entry name" value="EFh"/>
    <property type="match status" value="4"/>
</dbReference>
<dbReference type="SUPFAM" id="SSF47473">
    <property type="entry name" value="EF-hand"/>
    <property type="match status" value="1"/>
</dbReference>
<dbReference type="PROSITE" id="PS00018">
    <property type="entry name" value="EF_HAND_1"/>
    <property type="match status" value="4"/>
</dbReference>
<dbReference type="PROSITE" id="PS50222">
    <property type="entry name" value="EF_HAND_2"/>
    <property type="match status" value="4"/>
</dbReference>
<organism>
    <name type="scientific">Dictyostelium discoideum</name>
    <name type="common">Social amoeba</name>
    <dbReference type="NCBI Taxonomy" id="44689"/>
    <lineage>
        <taxon>Eukaryota</taxon>
        <taxon>Amoebozoa</taxon>
        <taxon>Evosea</taxon>
        <taxon>Eumycetozoa</taxon>
        <taxon>Dictyostelia</taxon>
        <taxon>Dictyosteliales</taxon>
        <taxon>Dictyosteliaceae</taxon>
        <taxon>Dictyostelium</taxon>
    </lineage>
</organism>
<accession>Q55G87</accession>
<accession>Q55G86</accession>
<accession>Q9GP83</accession>
<keyword id="KW-0025">Alternative splicing</keyword>
<keyword id="KW-0106">Calcium</keyword>
<keyword id="KW-0449">Lipoprotein</keyword>
<keyword id="KW-0479">Metal-binding</keyword>
<keyword id="KW-0519">Myristate</keyword>
<keyword id="KW-1185">Reference proteome</keyword>
<keyword id="KW-0677">Repeat</keyword>
<gene>
    <name type="primary">cnbA</name>
    <name type="ORF">DDB_G0267446</name>
</gene>
<proteinExistence type="evidence at protein level"/>
<comment type="function">
    <text evidence="4 5">Regulatory subunit of calcineurin, a calcium-dependent, calmodulin stimulated protein phosphatase (PubMed:11352578). Confers calcium sensitivity (PubMed:11352578). Important for stalk formation (PubMed:16512895).</text>
</comment>
<comment type="subunit">
    <text evidence="1">Forms a complex composed of a calmodulin-dependent catalytic subunit canA (also known as calcineurin A) and a regulatory Ca(2+)-binding subunit cnbA (also known as calcineurin B).</text>
</comment>
<comment type="alternative products">
    <event type="alternative splicing"/>
    <isoform>
        <id>Q55G87-1</id>
        <name>1</name>
        <name>CNBL</name>
        <sequence type="displayed"/>
    </isoform>
    <isoform>
        <id>Q55G87-2</id>
        <name>2</name>
        <name>CNBS</name>
        <sequence type="described" ref="VSP_033147"/>
    </isoform>
</comment>
<comment type="developmental stage">
    <text evidence="4">Isoform 1 is present in constant amounts in vegetative cells and throughout development. Isoform 2 is barely detectable in vegetative and early preaggregative cells, but present at high levels during aggregation and in later stages (at protein level).</text>
</comment>
<comment type="miscellaneous">
    <text evidence="5">Amoeba with reduced cnbA levels produce smaller stalk cells and smaller stalks due to incomplete vacuolization of stalk cells.</text>
</comment>
<comment type="similarity">
    <text evidence="6">Belongs to the calcineurin regulatory subunit family.</text>
</comment>
<feature type="initiator methionine" description="Removed" evidence="2">
    <location>
        <position position="1"/>
    </location>
</feature>
<feature type="chain" id="PRO_0000331196" description="Calcineurin subunit B type 1">
    <location>
        <begin position="2"/>
        <end position="180"/>
    </location>
</feature>
<feature type="domain" description="EF-hand 1" evidence="3">
    <location>
        <begin position="25"/>
        <end position="60"/>
    </location>
</feature>
<feature type="domain" description="EF-hand 2" evidence="3">
    <location>
        <begin position="62"/>
        <end position="92"/>
    </location>
</feature>
<feature type="domain" description="EF-hand 3" evidence="3">
    <location>
        <begin position="94"/>
        <end position="129"/>
    </location>
</feature>
<feature type="domain" description="EF-hand 4" evidence="3">
    <location>
        <begin position="135"/>
        <end position="170"/>
    </location>
</feature>
<feature type="region of interest" description="canA/calcineurin A binding" evidence="1">
    <location>
        <begin position="138"/>
        <end position="143"/>
    </location>
</feature>
<feature type="binding site" evidence="3">
    <location>
        <position position="38"/>
    </location>
    <ligand>
        <name>Ca(2+)</name>
        <dbReference type="ChEBI" id="CHEBI:29108"/>
        <label>1</label>
    </ligand>
</feature>
<feature type="binding site" evidence="3">
    <location>
        <position position="40"/>
    </location>
    <ligand>
        <name>Ca(2+)</name>
        <dbReference type="ChEBI" id="CHEBI:29108"/>
        <label>1</label>
    </ligand>
</feature>
<feature type="binding site" evidence="3">
    <location>
        <position position="42"/>
    </location>
    <ligand>
        <name>Ca(2+)</name>
        <dbReference type="ChEBI" id="CHEBI:29108"/>
        <label>1</label>
    </ligand>
</feature>
<feature type="binding site" evidence="3">
    <location>
        <position position="44"/>
    </location>
    <ligand>
        <name>Ca(2+)</name>
        <dbReference type="ChEBI" id="CHEBI:29108"/>
        <label>1</label>
    </ligand>
</feature>
<feature type="binding site" evidence="3">
    <location>
        <position position="49"/>
    </location>
    <ligand>
        <name>Ca(2+)</name>
        <dbReference type="ChEBI" id="CHEBI:29108"/>
        <label>1</label>
    </ligand>
</feature>
<feature type="binding site" evidence="3">
    <location>
        <position position="70"/>
    </location>
    <ligand>
        <name>Ca(2+)</name>
        <dbReference type="ChEBI" id="CHEBI:29108"/>
        <label>2</label>
    </ligand>
</feature>
<feature type="binding site" evidence="3">
    <location>
        <position position="72"/>
    </location>
    <ligand>
        <name>Ca(2+)</name>
        <dbReference type="ChEBI" id="CHEBI:29108"/>
        <label>2</label>
    </ligand>
</feature>
<feature type="binding site" evidence="3">
    <location>
        <position position="74"/>
    </location>
    <ligand>
        <name>Ca(2+)</name>
        <dbReference type="ChEBI" id="CHEBI:29108"/>
        <label>2</label>
    </ligand>
</feature>
<feature type="binding site" evidence="3">
    <location>
        <position position="76"/>
    </location>
    <ligand>
        <name>Ca(2+)</name>
        <dbReference type="ChEBI" id="CHEBI:29108"/>
        <label>2</label>
    </ligand>
</feature>
<feature type="binding site" evidence="3">
    <location>
        <position position="81"/>
    </location>
    <ligand>
        <name>Ca(2+)</name>
        <dbReference type="ChEBI" id="CHEBI:29108"/>
        <label>2</label>
    </ligand>
</feature>
<feature type="binding site" evidence="3">
    <location>
        <position position="107"/>
    </location>
    <ligand>
        <name>Ca(2+)</name>
        <dbReference type="ChEBI" id="CHEBI:29108"/>
        <label>3</label>
    </ligand>
</feature>
<feature type="binding site" evidence="3">
    <location>
        <position position="109"/>
    </location>
    <ligand>
        <name>Ca(2+)</name>
        <dbReference type="ChEBI" id="CHEBI:29108"/>
        <label>3</label>
    </ligand>
</feature>
<feature type="binding site" evidence="3">
    <location>
        <position position="111"/>
    </location>
    <ligand>
        <name>Ca(2+)</name>
        <dbReference type="ChEBI" id="CHEBI:29108"/>
        <label>3</label>
    </ligand>
</feature>
<feature type="binding site" evidence="3">
    <location>
        <position position="118"/>
    </location>
    <ligand>
        <name>Ca(2+)</name>
        <dbReference type="ChEBI" id="CHEBI:29108"/>
        <label>3</label>
    </ligand>
</feature>
<feature type="binding site" evidence="3">
    <location>
        <position position="148"/>
    </location>
    <ligand>
        <name>Ca(2+)</name>
        <dbReference type="ChEBI" id="CHEBI:29108"/>
        <label>4</label>
    </ligand>
</feature>
<feature type="binding site" evidence="3">
    <location>
        <position position="150"/>
    </location>
    <ligand>
        <name>Ca(2+)</name>
        <dbReference type="ChEBI" id="CHEBI:29108"/>
        <label>4</label>
    </ligand>
</feature>
<feature type="binding site" evidence="3">
    <location>
        <position position="152"/>
    </location>
    <ligand>
        <name>Ca(2+)</name>
        <dbReference type="ChEBI" id="CHEBI:29108"/>
        <label>4</label>
    </ligand>
</feature>
<feature type="binding site" evidence="3">
    <location>
        <position position="154"/>
    </location>
    <ligand>
        <name>Ca(2+)</name>
        <dbReference type="ChEBI" id="CHEBI:29108"/>
        <label>4</label>
    </ligand>
</feature>
<feature type="binding site" evidence="3">
    <location>
        <position position="159"/>
    </location>
    <ligand>
        <name>Ca(2+)</name>
        <dbReference type="ChEBI" id="CHEBI:29108"/>
        <label>4</label>
    </ligand>
</feature>
<feature type="site" description="Interaction with PxVP motif in substrates of the catalytic subunit" evidence="1">
    <location>
        <position position="125"/>
    </location>
</feature>
<feature type="lipid moiety-binding region" description="N-myristoyl glycine" evidence="2">
    <location>
        <position position="2"/>
    </location>
</feature>
<feature type="splice variant" id="VSP_033147" description="In isoform 2." evidence="6">
    <location>
        <begin position="1"/>
        <end position="15"/>
    </location>
</feature>
<feature type="sequence conflict" description="In Ref. 1; CAC20026." evidence="6" ref="1">
    <original>F</original>
    <variation>S</variation>
    <location>
        <position position="80"/>
    </location>
</feature>
<feature type="sequence conflict" description="In Ref. 1; CAC20026." evidence="6" ref="1">
    <original>G</original>
    <variation>V</variation>
    <location>
        <position position="165"/>
    </location>
</feature>
<evidence type="ECO:0000250" key="1">
    <source>
        <dbReference type="UniProtKB" id="P63098"/>
    </source>
</evidence>
<evidence type="ECO:0000255" key="2"/>
<evidence type="ECO:0000255" key="3">
    <source>
        <dbReference type="PROSITE-ProRule" id="PRU00448"/>
    </source>
</evidence>
<evidence type="ECO:0000269" key="4">
    <source>
    </source>
</evidence>
<evidence type="ECO:0000269" key="5">
    <source>
    </source>
</evidence>
<evidence type="ECO:0000305" key="6"/>
<name>CANB1_DICDI</name>
<reference key="1">
    <citation type="journal article" date="2001" name="J. Mol. Biol.">
        <title>Unconventional mRNA processing in the expression of two calcineurin B isoforms in Dictyostelium.</title>
        <authorList>
            <person name="Aichem A."/>
            <person name="Mutzel R."/>
        </authorList>
    </citation>
    <scope>NUCLEOTIDE SEQUENCE [GENOMIC DNA]</scope>
    <scope>ALTERNATIVE SPLICING (ISOFORMS 1 AND 2)</scope>
    <scope>FUNCTION</scope>
    <scope>INTERACTION WITH CANA</scope>
    <scope>DEVELOPMENTAL STAGE</scope>
    <source>
        <strain>AX2</strain>
    </source>
</reference>
<reference key="2">
    <citation type="journal article" date="2005" name="Nature">
        <title>The genome of the social amoeba Dictyostelium discoideum.</title>
        <authorList>
            <person name="Eichinger L."/>
            <person name="Pachebat J.A."/>
            <person name="Gloeckner G."/>
            <person name="Rajandream M.A."/>
            <person name="Sucgang R."/>
            <person name="Berriman M."/>
            <person name="Song J."/>
            <person name="Olsen R."/>
            <person name="Szafranski K."/>
            <person name="Xu Q."/>
            <person name="Tunggal B."/>
            <person name="Kummerfeld S."/>
            <person name="Madera M."/>
            <person name="Konfortov B.A."/>
            <person name="Rivero F."/>
            <person name="Bankier A.T."/>
            <person name="Lehmann R."/>
            <person name="Hamlin N."/>
            <person name="Davies R."/>
            <person name="Gaudet P."/>
            <person name="Fey P."/>
            <person name="Pilcher K."/>
            <person name="Chen G."/>
            <person name="Saunders D."/>
            <person name="Sodergren E.J."/>
            <person name="Davis P."/>
            <person name="Kerhornou A."/>
            <person name="Nie X."/>
            <person name="Hall N."/>
            <person name="Anjard C."/>
            <person name="Hemphill L."/>
            <person name="Bason N."/>
            <person name="Farbrother P."/>
            <person name="Desany B."/>
            <person name="Just E."/>
            <person name="Morio T."/>
            <person name="Rost R."/>
            <person name="Churcher C.M."/>
            <person name="Cooper J."/>
            <person name="Haydock S."/>
            <person name="van Driessche N."/>
            <person name="Cronin A."/>
            <person name="Goodhead I."/>
            <person name="Muzny D.M."/>
            <person name="Mourier T."/>
            <person name="Pain A."/>
            <person name="Lu M."/>
            <person name="Harper D."/>
            <person name="Lindsay R."/>
            <person name="Hauser H."/>
            <person name="James K.D."/>
            <person name="Quiles M."/>
            <person name="Madan Babu M."/>
            <person name="Saito T."/>
            <person name="Buchrieser C."/>
            <person name="Wardroper A."/>
            <person name="Felder M."/>
            <person name="Thangavelu M."/>
            <person name="Johnson D."/>
            <person name="Knights A."/>
            <person name="Loulseged H."/>
            <person name="Mungall K.L."/>
            <person name="Oliver K."/>
            <person name="Price C."/>
            <person name="Quail M.A."/>
            <person name="Urushihara H."/>
            <person name="Hernandez J."/>
            <person name="Rabbinowitsch E."/>
            <person name="Steffen D."/>
            <person name="Sanders M."/>
            <person name="Ma J."/>
            <person name="Kohara Y."/>
            <person name="Sharp S."/>
            <person name="Simmonds M.N."/>
            <person name="Spiegler S."/>
            <person name="Tivey A."/>
            <person name="Sugano S."/>
            <person name="White B."/>
            <person name="Walker D."/>
            <person name="Woodward J.R."/>
            <person name="Winckler T."/>
            <person name="Tanaka Y."/>
            <person name="Shaulsky G."/>
            <person name="Schleicher M."/>
            <person name="Weinstock G.M."/>
            <person name="Rosenthal A."/>
            <person name="Cox E.C."/>
            <person name="Chisholm R.L."/>
            <person name="Gibbs R.A."/>
            <person name="Loomis W.F."/>
            <person name="Platzer M."/>
            <person name="Kay R.R."/>
            <person name="Williams J.G."/>
            <person name="Dear P.H."/>
            <person name="Noegel A.A."/>
            <person name="Barrell B.G."/>
            <person name="Kuspa A."/>
        </authorList>
    </citation>
    <scope>NUCLEOTIDE SEQUENCE [LARGE SCALE GENOMIC DNA]</scope>
    <source>
        <strain>AX4</strain>
    </source>
</reference>
<reference key="3">
    <citation type="journal article" date="2006" name="BMC Dev. Biol.">
        <title>Aberrant stalk development and breakdown of tip dominance in Dictyostelium cell lines with RNAi-silenced expression of calcineurin B.</title>
        <authorList>
            <person name="Boeckeler K."/>
            <person name="Tischendorf G."/>
            <person name="Mutzel R."/>
            <person name="Weissenmayer B."/>
        </authorList>
    </citation>
    <scope>FUNCTION</scope>
</reference>